<name>PURA_BIFA0</name>
<sequence length="428" mass="46348">MPGIVLIGAQWGDEGKGKATDLIGTKVDYVARFNGGNNAGHTVVVGDESYALHLLPSGIISPTATPVIGNGVVVDPEVLLEEIEGLESRGIDCSRLLVSESAHVIAPYHRMIDKVTERFAGKKKIGTTGRGIGPAYADKINRVGIRIADLFHEDVLRDKVSNALHQKNQMLVKLYNRRAFDVEATVQELLEVGVKLKPYVANTSLILNNALDDGKTVLFEGGQATMLDIDHGTYPFVTSSNPTAGGACTGTGVGPTKIDRVIGVSKAYVTRVGEGPFPTELFDENGEWLRAQGHEYGVTTGRPRRCGWFDAVVNRYATQVNGLTDIVLTKLDVLTGLDEIPVCVAYDVNGVRYDDMPTDQSAFAAAKPIYGMMPGWSEDISQVHAFEDLPQTCQDYVKRLEELSGCRISAIGTGPQRDHIIEVHSLLD</sequence>
<proteinExistence type="inferred from homology"/>
<accession>B8DVC2</accession>
<feature type="chain" id="PRO_1000116452" description="Adenylosuccinate synthetase">
    <location>
        <begin position="1"/>
        <end position="428"/>
    </location>
</feature>
<feature type="active site" description="Proton acceptor" evidence="1">
    <location>
        <position position="13"/>
    </location>
</feature>
<feature type="active site" description="Proton donor" evidence="1">
    <location>
        <position position="41"/>
    </location>
</feature>
<feature type="binding site" evidence="1">
    <location>
        <begin position="12"/>
        <end position="18"/>
    </location>
    <ligand>
        <name>GTP</name>
        <dbReference type="ChEBI" id="CHEBI:37565"/>
    </ligand>
</feature>
<feature type="binding site" description="in other chain" evidence="1">
    <location>
        <begin position="13"/>
        <end position="16"/>
    </location>
    <ligand>
        <name>IMP</name>
        <dbReference type="ChEBI" id="CHEBI:58053"/>
        <note>ligand shared between dimeric partners</note>
    </ligand>
</feature>
<feature type="binding site" evidence="1">
    <location>
        <position position="13"/>
    </location>
    <ligand>
        <name>Mg(2+)</name>
        <dbReference type="ChEBI" id="CHEBI:18420"/>
    </ligand>
</feature>
<feature type="binding site" description="in other chain" evidence="1">
    <location>
        <begin position="38"/>
        <end position="41"/>
    </location>
    <ligand>
        <name>IMP</name>
        <dbReference type="ChEBI" id="CHEBI:58053"/>
        <note>ligand shared between dimeric partners</note>
    </ligand>
</feature>
<feature type="binding site" evidence="1">
    <location>
        <begin position="40"/>
        <end position="42"/>
    </location>
    <ligand>
        <name>GTP</name>
        <dbReference type="ChEBI" id="CHEBI:37565"/>
    </ligand>
</feature>
<feature type="binding site" evidence="1">
    <location>
        <position position="40"/>
    </location>
    <ligand>
        <name>Mg(2+)</name>
        <dbReference type="ChEBI" id="CHEBI:18420"/>
    </ligand>
</feature>
<feature type="binding site" description="in other chain" evidence="1">
    <location>
        <position position="128"/>
    </location>
    <ligand>
        <name>IMP</name>
        <dbReference type="ChEBI" id="CHEBI:58053"/>
        <note>ligand shared between dimeric partners</note>
    </ligand>
</feature>
<feature type="binding site" evidence="1">
    <location>
        <position position="142"/>
    </location>
    <ligand>
        <name>IMP</name>
        <dbReference type="ChEBI" id="CHEBI:58053"/>
        <note>ligand shared between dimeric partners</note>
    </ligand>
</feature>
<feature type="binding site" description="in other chain" evidence="1">
    <location>
        <position position="223"/>
    </location>
    <ligand>
        <name>IMP</name>
        <dbReference type="ChEBI" id="CHEBI:58053"/>
        <note>ligand shared between dimeric partners</note>
    </ligand>
</feature>
<feature type="binding site" description="in other chain" evidence="1">
    <location>
        <position position="238"/>
    </location>
    <ligand>
        <name>IMP</name>
        <dbReference type="ChEBI" id="CHEBI:58053"/>
        <note>ligand shared between dimeric partners</note>
    </ligand>
</feature>
<feature type="binding site" evidence="1">
    <location>
        <begin position="298"/>
        <end position="304"/>
    </location>
    <ligand>
        <name>substrate</name>
    </ligand>
</feature>
<feature type="binding site" description="in other chain" evidence="1">
    <location>
        <position position="302"/>
    </location>
    <ligand>
        <name>IMP</name>
        <dbReference type="ChEBI" id="CHEBI:58053"/>
        <note>ligand shared between dimeric partners</note>
    </ligand>
</feature>
<feature type="binding site" evidence="1">
    <location>
        <position position="304"/>
    </location>
    <ligand>
        <name>GTP</name>
        <dbReference type="ChEBI" id="CHEBI:37565"/>
    </ligand>
</feature>
<feature type="binding site" evidence="1">
    <location>
        <begin position="330"/>
        <end position="332"/>
    </location>
    <ligand>
        <name>GTP</name>
        <dbReference type="ChEBI" id="CHEBI:37565"/>
    </ligand>
</feature>
<feature type="binding site" evidence="1">
    <location>
        <begin position="412"/>
        <end position="414"/>
    </location>
    <ligand>
        <name>GTP</name>
        <dbReference type="ChEBI" id="CHEBI:37565"/>
    </ligand>
</feature>
<evidence type="ECO:0000255" key="1">
    <source>
        <dbReference type="HAMAP-Rule" id="MF_00011"/>
    </source>
</evidence>
<gene>
    <name evidence="1" type="primary">purA</name>
    <name type="ordered locus">BLA_0120</name>
</gene>
<dbReference type="EC" id="6.3.4.4" evidence="1"/>
<dbReference type="EMBL" id="CP001213">
    <property type="protein sequence ID" value="ACL28423.1"/>
    <property type="molecule type" value="Genomic_DNA"/>
</dbReference>
<dbReference type="RefSeq" id="WP_004218418.1">
    <property type="nucleotide sequence ID" value="NC_011835.1"/>
</dbReference>
<dbReference type="SMR" id="B8DVC2"/>
<dbReference type="STRING" id="442563.BLA_0120"/>
<dbReference type="KEGG" id="bla:BLA_0120"/>
<dbReference type="HOGENOM" id="CLU_029848_0_0_11"/>
<dbReference type="UniPathway" id="UPA00075">
    <property type="reaction ID" value="UER00335"/>
</dbReference>
<dbReference type="Proteomes" id="UP000002456">
    <property type="component" value="Chromosome"/>
</dbReference>
<dbReference type="GO" id="GO:0005737">
    <property type="term" value="C:cytoplasm"/>
    <property type="evidence" value="ECO:0007669"/>
    <property type="project" value="UniProtKB-SubCell"/>
</dbReference>
<dbReference type="GO" id="GO:0004019">
    <property type="term" value="F:adenylosuccinate synthase activity"/>
    <property type="evidence" value="ECO:0007669"/>
    <property type="project" value="UniProtKB-UniRule"/>
</dbReference>
<dbReference type="GO" id="GO:0005525">
    <property type="term" value="F:GTP binding"/>
    <property type="evidence" value="ECO:0007669"/>
    <property type="project" value="UniProtKB-UniRule"/>
</dbReference>
<dbReference type="GO" id="GO:0000287">
    <property type="term" value="F:magnesium ion binding"/>
    <property type="evidence" value="ECO:0007669"/>
    <property type="project" value="UniProtKB-UniRule"/>
</dbReference>
<dbReference type="GO" id="GO:0044208">
    <property type="term" value="P:'de novo' AMP biosynthetic process"/>
    <property type="evidence" value="ECO:0007669"/>
    <property type="project" value="UniProtKB-UniRule"/>
</dbReference>
<dbReference type="GO" id="GO:0046040">
    <property type="term" value="P:IMP metabolic process"/>
    <property type="evidence" value="ECO:0007669"/>
    <property type="project" value="TreeGrafter"/>
</dbReference>
<dbReference type="CDD" id="cd03108">
    <property type="entry name" value="AdSS"/>
    <property type="match status" value="1"/>
</dbReference>
<dbReference type="FunFam" id="1.10.300.10:FF:000001">
    <property type="entry name" value="Adenylosuccinate synthetase"/>
    <property type="match status" value="1"/>
</dbReference>
<dbReference type="FunFam" id="3.90.170.10:FF:000001">
    <property type="entry name" value="Adenylosuccinate synthetase"/>
    <property type="match status" value="1"/>
</dbReference>
<dbReference type="Gene3D" id="3.40.440.10">
    <property type="entry name" value="Adenylosuccinate Synthetase, subunit A, domain 1"/>
    <property type="match status" value="1"/>
</dbReference>
<dbReference type="Gene3D" id="1.10.300.10">
    <property type="entry name" value="Adenylosuccinate Synthetase, subunit A, domain 2"/>
    <property type="match status" value="1"/>
</dbReference>
<dbReference type="Gene3D" id="3.90.170.10">
    <property type="entry name" value="Adenylosuccinate Synthetase, subunit A, domain 3"/>
    <property type="match status" value="1"/>
</dbReference>
<dbReference type="HAMAP" id="MF_00011">
    <property type="entry name" value="Adenylosucc_synth"/>
    <property type="match status" value="1"/>
</dbReference>
<dbReference type="InterPro" id="IPR018220">
    <property type="entry name" value="Adenylosuccin_syn_GTP-bd"/>
</dbReference>
<dbReference type="InterPro" id="IPR033128">
    <property type="entry name" value="Adenylosuccin_syn_Lys_AS"/>
</dbReference>
<dbReference type="InterPro" id="IPR042109">
    <property type="entry name" value="Adenylosuccinate_synth_dom1"/>
</dbReference>
<dbReference type="InterPro" id="IPR042110">
    <property type="entry name" value="Adenylosuccinate_synth_dom2"/>
</dbReference>
<dbReference type="InterPro" id="IPR042111">
    <property type="entry name" value="Adenylosuccinate_synth_dom3"/>
</dbReference>
<dbReference type="InterPro" id="IPR001114">
    <property type="entry name" value="Adenylosuccinate_synthetase"/>
</dbReference>
<dbReference type="InterPro" id="IPR027417">
    <property type="entry name" value="P-loop_NTPase"/>
</dbReference>
<dbReference type="NCBIfam" id="NF002223">
    <property type="entry name" value="PRK01117.1"/>
    <property type="match status" value="1"/>
</dbReference>
<dbReference type="NCBIfam" id="TIGR00184">
    <property type="entry name" value="purA"/>
    <property type="match status" value="1"/>
</dbReference>
<dbReference type="PANTHER" id="PTHR11846">
    <property type="entry name" value="ADENYLOSUCCINATE SYNTHETASE"/>
    <property type="match status" value="1"/>
</dbReference>
<dbReference type="PANTHER" id="PTHR11846:SF0">
    <property type="entry name" value="ADENYLOSUCCINATE SYNTHETASE"/>
    <property type="match status" value="1"/>
</dbReference>
<dbReference type="Pfam" id="PF00709">
    <property type="entry name" value="Adenylsucc_synt"/>
    <property type="match status" value="1"/>
</dbReference>
<dbReference type="SMART" id="SM00788">
    <property type="entry name" value="Adenylsucc_synt"/>
    <property type="match status" value="1"/>
</dbReference>
<dbReference type="SUPFAM" id="SSF52540">
    <property type="entry name" value="P-loop containing nucleoside triphosphate hydrolases"/>
    <property type="match status" value="1"/>
</dbReference>
<dbReference type="PROSITE" id="PS01266">
    <property type="entry name" value="ADENYLOSUCCIN_SYN_1"/>
    <property type="match status" value="1"/>
</dbReference>
<dbReference type="PROSITE" id="PS00513">
    <property type="entry name" value="ADENYLOSUCCIN_SYN_2"/>
    <property type="match status" value="1"/>
</dbReference>
<comment type="function">
    <text evidence="1">Plays an important role in the de novo pathway of purine nucleotide biosynthesis. Catalyzes the first committed step in the biosynthesis of AMP from IMP.</text>
</comment>
<comment type="catalytic activity">
    <reaction evidence="1">
        <text>IMP + L-aspartate + GTP = N(6)-(1,2-dicarboxyethyl)-AMP + GDP + phosphate + 2 H(+)</text>
        <dbReference type="Rhea" id="RHEA:15753"/>
        <dbReference type="ChEBI" id="CHEBI:15378"/>
        <dbReference type="ChEBI" id="CHEBI:29991"/>
        <dbReference type="ChEBI" id="CHEBI:37565"/>
        <dbReference type="ChEBI" id="CHEBI:43474"/>
        <dbReference type="ChEBI" id="CHEBI:57567"/>
        <dbReference type="ChEBI" id="CHEBI:58053"/>
        <dbReference type="ChEBI" id="CHEBI:58189"/>
        <dbReference type="EC" id="6.3.4.4"/>
    </reaction>
</comment>
<comment type="cofactor">
    <cofactor evidence="1">
        <name>Mg(2+)</name>
        <dbReference type="ChEBI" id="CHEBI:18420"/>
    </cofactor>
    <text evidence="1">Binds 1 Mg(2+) ion per subunit.</text>
</comment>
<comment type="pathway">
    <text evidence="1">Purine metabolism; AMP biosynthesis via de novo pathway; AMP from IMP: step 1/2.</text>
</comment>
<comment type="subunit">
    <text evidence="1">Homodimer.</text>
</comment>
<comment type="subcellular location">
    <subcellularLocation>
        <location evidence="1">Cytoplasm</location>
    </subcellularLocation>
</comment>
<comment type="similarity">
    <text evidence="1">Belongs to the adenylosuccinate synthetase family.</text>
</comment>
<keyword id="KW-0963">Cytoplasm</keyword>
<keyword id="KW-0342">GTP-binding</keyword>
<keyword id="KW-0436">Ligase</keyword>
<keyword id="KW-0460">Magnesium</keyword>
<keyword id="KW-0479">Metal-binding</keyword>
<keyword id="KW-0547">Nucleotide-binding</keyword>
<keyword id="KW-0658">Purine biosynthesis</keyword>
<keyword id="KW-1185">Reference proteome</keyword>
<reference key="1">
    <citation type="journal article" date="2009" name="J. Bacteriol.">
        <title>Genome sequence of the probiotic bacterium Bifidobacterium animalis subsp. lactis AD011.</title>
        <authorList>
            <person name="Kim J.F."/>
            <person name="Jeong H."/>
            <person name="Yu D.S."/>
            <person name="Choi S.-H."/>
            <person name="Hur C.-G."/>
            <person name="Park M.-S."/>
            <person name="Yoon S.H."/>
            <person name="Kim D.-W."/>
            <person name="Ji G.E."/>
            <person name="Park H.-S."/>
            <person name="Oh T.K."/>
        </authorList>
    </citation>
    <scope>NUCLEOTIDE SEQUENCE [LARGE SCALE GENOMIC DNA]</scope>
    <source>
        <strain>AD011</strain>
    </source>
</reference>
<protein>
    <recommendedName>
        <fullName evidence="1">Adenylosuccinate synthetase</fullName>
        <shortName evidence="1">AMPSase</shortName>
        <shortName evidence="1">AdSS</shortName>
        <ecNumber evidence="1">6.3.4.4</ecNumber>
    </recommendedName>
    <alternativeName>
        <fullName evidence="1">IMP--aspartate ligase</fullName>
    </alternativeName>
</protein>
<organism>
    <name type="scientific">Bifidobacterium animalis subsp. lactis (strain AD011)</name>
    <dbReference type="NCBI Taxonomy" id="442563"/>
    <lineage>
        <taxon>Bacteria</taxon>
        <taxon>Bacillati</taxon>
        <taxon>Actinomycetota</taxon>
        <taxon>Actinomycetes</taxon>
        <taxon>Bifidobacteriales</taxon>
        <taxon>Bifidobacteriaceae</taxon>
        <taxon>Bifidobacterium</taxon>
    </lineage>
</organism>